<name>HLYE_SALPA</name>
<proteinExistence type="inferred from homology"/>
<comment type="function">
    <text evidence="1">Toxin, which has some hemolytic activity towards mammalian cells. Acts by forming a pore-like structure upon contact with mammalian cells (By similarity).</text>
</comment>
<comment type="subunit">
    <text evidence="1">Monomer and oligomer. In periplasm, it is present as a monomer, while in outer membrane vesicles, it oligomerizes to form a pore structure that is active. The pore is formed by a dodecamer (By similarity).</text>
</comment>
<comment type="subcellular location">
    <subcellularLocation>
        <location evidence="1">Secreted</location>
    </subcellularLocation>
    <subcellularLocation>
        <location evidence="1">Periplasm</location>
    </subcellularLocation>
    <subcellularLocation>
        <location evidence="3">Host cell membrane</location>
        <topology evidence="3">Single-pass membrane protein</topology>
    </subcellularLocation>
    <text evidence="1">Exported from the cell by outer membrane vesicles. Also found in the periplasmic space (By similarity).</text>
</comment>
<comment type="PTM">
    <text evidence="1">In periplasm, it forms a disulfide bond, which prevents the oligomerization. In outer membrane vesicles, the redox status prevents formation of the disulfide bond, leading to oligomerization and pore formation (By similarity).</text>
</comment>
<comment type="similarity">
    <text evidence="3">Belongs to the hemolysin E family.</text>
</comment>
<comment type="sequence caution" evidence="3">
    <conflict type="erroneous initiation">
        <sequence resource="EMBL-CDS" id="AAV77254"/>
    </conflict>
</comment>
<dbReference type="EMBL" id="AJ313033">
    <property type="protein sequence ID" value="CAC38362.1"/>
    <property type="molecule type" value="Genomic_DNA"/>
</dbReference>
<dbReference type="EMBL" id="CP000026">
    <property type="protein sequence ID" value="AAV77254.1"/>
    <property type="status" value="ALT_INIT"/>
    <property type="molecule type" value="Genomic_DNA"/>
</dbReference>
<dbReference type="SMR" id="Q93RR6"/>
<dbReference type="KEGG" id="spt:SPA1306"/>
<dbReference type="HOGENOM" id="CLU_080941_0_0_6"/>
<dbReference type="Proteomes" id="UP000008185">
    <property type="component" value="Chromosome"/>
</dbReference>
<dbReference type="GO" id="GO:0005576">
    <property type="term" value="C:extracellular region"/>
    <property type="evidence" value="ECO:0007669"/>
    <property type="project" value="UniProtKB-SubCell"/>
</dbReference>
<dbReference type="GO" id="GO:0020002">
    <property type="term" value="C:host cell plasma membrane"/>
    <property type="evidence" value="ECO:0007669"/>
    <property type="project" value="UniProtKB-SubCell"/>
</dbReference>
<dbReference type="GO" id="GO:0016020">
    <property type="term" value="C:membrane"/>
    <property type="evidence" value="ECO:0007669"/>
    <property type="project" value="UniProtKB-KW"/>
</dbReference>
<dbReference type="GO" id="GO:0042597">
    <property type="term" value="C:periplasmic space"/>
    <property type="evidence" value="ECO:0007669"/>
    <property type="project" value="UniProtKB-SubCell"/>
</dbReference>
<dbReference type="GO" id="GO:0090729">
    <property type="term" value="F:toxin activity"/>
    <property type="evidence" value="ECO:0007669"/>
    <property type="project" value="UniProtKB-KW"/>
</dbReference>
<dbReference type="GO" id="GO:0044179">
    <property type="term" value="P:hemolysis in another organism"/>
    <property type="evidence" value="ECO:0007669"/>
    <property type="project" value="InterPro"/>
</dbReference>
<dbReference type="CDD" id="cd22651">
    <property type="entry name" value="HlyE-like"/>
    <property type="match status" value="1"/>
</dbReference>
<dbReference type="Gene3D" id="1.20.1170.10">
    <property type="match status" value="1"/>
</dbReference>
<dbReference type="InterPro" id="IPR027018">
    <property type="entry name" value="Hemolysin_E"/>
</dbReference>
<dbReference type="NCBIfam" id="NF008477">
    <property type="entry name" value="PRK11376.1"/>
    <property type="match status" value="1"/>
</dbReference>
<dbReference type="Pfam" id="PF06109">
    <property type="entry name" value="HlyE"/>
    <property type="match status" value="1"/>
</dbReference>
<dbReference type="SUPFAM" id="SSF58100">
    <property type="entry name" value="Bacterial hemolysins"/>
    <property type="match status" value="1"/>
</dbReference>
<evidence type="ECO:0000250" key="1"/>
<evidence type="ECO:0000255" key="2"/>
<evidence type="ECO:0000305" key="3"/>
<keyword id="KW-0204">Cytolysis</keyword>
<keyword id="KW-1015">Disulfide bond</keyword>
<keyword id="KW-0354">Hemolysis</keyword>
<keyword id="KW-1032">Host cell membrane</keyword>
<keyword id="KW-1043">Host membrane</keyword>
<keyword id="KW-0472">Membrane</keyword>
<keyword id="KW-0574">Periplasm</keyword>
<keyword id="KW-0964">Secreted</keyword>
<keyword id="KW-0800">Toxin</keyword>
<keyword id="KW-0812">Transmembrane</keyword>
<keyword id="KW-1133">Transmembrane helix</keyword>
<keyword id="KW-0843">Virulence</keyword>
<reference key="1">
    <citation type="journal article" date="2002" name="Infect. Immun.">
        <title>Characterization of a pore-forming cytotoxin expressed by Salmonella enterica serovars typhi and paratyphi A.</title>
        <authorList>
            <person name="Oscarsson J."/>
            <person name="Westermark M."/>
            <person name="Loefdahl S."/>
            <person name="Olsen B."/>
            <person name="Palmgren H."/>
            <person name="Mizunoe Y."/>
            <person name="Wai S.N."/>
            <person name="Uhlin B.E."/>
        </authorList>
    </citation>
    <scope>NUCLEOTIDE SEQUENCE [GENOMIC DNA]</scope>
    <source>
        <strain>SMI S3068/99</strain>
    </source>
</reference>
<reference key="2">
    <citation type="journal article" date="2004" name="Nat. Genet.">
        <title>Comparison of genome degradation in Paratyphi A and Typhi, human-restricted serovars of Salmonella enterica that cause typhoid.</title>
        <authorList>
            <person name="McClelland M."/>
            <person name="Sanderson K.E."/>
            <person name="Clifton S.W."/>
            <person name="Latreille P."/>
            <person name="Porwollik S."/>
            <person name="Sabo A."/>
            <person name="Meyer R."/>
            <person name="Bieri T."/>
            <person name="Ozersky P."/>
            <person name="McLellan M."/>
            <person name="Harkins C.R."/>
            <person name="Wang C."/>
            <person name="Nguyen C."/>
            <person name="Berghoff A."/>
            <person name="Elliott G."/>
            <person name="Kohlberg S."/>
            <person name="Strong C."/>
            <person name="Du F."/>
            <person name="Carter J."/>
            <person name="Kremizki C."/>
            <person name="Layman D."/>
            <person name="Leonard S."/>
            <person name="Sun H."/>
            <person name="Fulton L."/>
            <person name="Nash W."/>
            <person name="Miner T."/>
            <person name="Minx P."/>
            <person name="Delehaunty K."/>
            <person name="Fronick C."/>
            <person name="Magrini V."/>
            <person name="Nhan M."/>
            <person name="Warren W."/>
            <person name="Florea L."/>
            <person name="Spieth J."/>
            <person name="Wilson R.K."/>
        </authorList>
    </citation>
    <scope>NUCLEOTIDE SEQUENCE [LARGE SCALE GENOMIC DNA]</scope>
    <source>
        <strain>ATCC 9150 / SARB42</strain>
    </source>
</reference>
<protein>
    <recommendedName>
        <fullName>Hemolysin E</fullName>
    </recommendedName>
    <alternativeName>
        <fullName>Cytotoxin ClyA</fullName>
    </alternativeName>
    <alternativeName>
        <fullName>Silent hemolysin SheA</fullName>
    </alternativeName>
</protein>
<gene>
    <name type="primary">hlyE</name>
    <name type="synonym">clyA</name>
    <name type="synonym">sheA</name>
    <name type="ordered locus">SPA1306</name>
</gene>
<sequence length="303" mass="33744">MTGIFAEQTVEVVKSAIETADGALDFYNKYLDQVIPWKTFDETIKELSRFKQEYSQEASVLVGDIKVLLMDSQDKYFEATQTVYEWCGVVTQLLSAYILLFDEYNEKKASAQKDILIRILDDGVNKLNEAQKSLLGSSQSFNNASGKLLALDSQLTNDFSEKSSYFQSQVDRIRKEAYAGAAAGIVAGPFGLIISYSIAAGVIEGKLIPELNDRLKAVQNFFTSLSVTVKQANKDIDAAKLKLATEIAAIGEIKTETETTRFYVDYDDLMLSLLKGAAKKMINTCNEYQQRHGKKTLLEVPDI</sequence>
<accession>Q93RR6</accession>
<accession>Q5PHY8</accession>
<feature type="initiator methionine" description="Removed" evidence="1">
    <location>
        <position position="1"/>
    </location>
</feature>
<feature type="chain" id="PRO_0000083997" description="Hemolysin E">
    <location>
        <begin position="2"/>
        <end position="303"/>
    </location>
</feature>
<feature type="transmembrane region" description="Helical" evidence="2">
    <location>
        <begin position="179"/>
        <end position="199"/>
    </location>
</feature>
<feature type="disulfide bond" description="In monomeric form" evidence="1">
    <location>
        <begin position="87"/>
        <end position="285"/>
    </location>
</feature>
<organism>
    <name type="scientific">Salmonella paratyphi A (strain ATCC 9150 / SARB42)</name>
    <dbReference type="NCBI Taxonomy" id="295319"/>
    <lineage>
        <taxon>Bacteria</taxon>
        <taxon>Pseudomonadati</taxon>
        <taxon>Pseudomonadota</taxon>
        <taxon>Gammaproteobacteria</taxon>
        <taxon>Enterobacterales</taxon>
        <taxon>Enterobacteriaceae</taxon>
        <taxon>Salmonella</taxon>
    </lineage>
</organism>